<dbReference type="EC" id="4.2.3.59"/>
<dbReference type="EMBL" id="AY906868">
    <property type="protein sequence ID" value="AAX07266.1"/>
    <property type="molecule type" value="mRNA"/>
</dbReference>
<dbReference type="SMR" id="Q4QSN4"/>
<dbReference type="KEGG" id="ag:AAX07266"/>
<dbReference type="BioCyc" id="MetaCyc:MONOMER-16024"/>
<dbReference type="BRENDA" id="4.2.3.59">
    <property type="organism ID" value="5214"/>
</dbReference>
<dbReference type="UniPathway" id="UPA00924"/>
<dbReference type="GO" id="GO:0005737">
    <property type="term" value="C:cytoplasm"/>
    <property type="evidence" value="ECO:0007669"/>
    <property type="project" value="UniProtKB-SubCell"/>
</dbReference>
<dbReference type="GO" id="GO:0000287">
    <property type="term" value="F:magnesium ion binding"/>
    <property type="evidence" value="ECO:0007669"/>
    <property type="project" value="InterPro"/>
</dbReference>
<dbReference type="GO" id="GO:0010333">
    <property type="term" value="F:terpene synthase activity"/>
    <property type="evidence" value="ECO:0007669"/>
    <property type="project" value="InterPro"/>
</dbReference>
<dbReference type="GO" id="GO:0016102">
    <property type="term" value="P:diterpenoid biosynthetic process"/>
    <property type="evidence" value="ECO:0007669"/>
    <property type="project" value="InterPro"/>
</dbReference>
<dbReference type="CDD" id="cd00684">
    <property type="entry name" value="Terpene_cyclase_plant_C1"/>
    <property type="match status" value="1"/>
</dbReference>
<dbReference type="FunFam" id="1.50.10.130:FF:000002">
    <property type="entry name" value="Ent-copalyl diphosphate synthase, chloroplastic"/>
    <property type="match status" value="1"/>
</dbReference>
<dbReference type="FunFam" id="1.10.600.10:FF:000005">
    <property type="entry name" value="Ent-kaur-16-ene synthase, chloroplastic"/>
    <property type="match status" value="1"/>
</dbReference>
<dbReference type="Gene3D" id="1.50.10.160">
    <property type="match status" value="1"/>
</dbReference>
<dbReference type="Gene3D" id="1.10.600.10">
    <property type="entry name" value="Farnesyl Diphosphate Synthase"/>
    <property type="match status" value="1"/>
</dbReference>
<dbReference type="Gene3D" id="1.50.10.130">
    <property type="entry name" value="Terpene synthase, N-terminal domain"/>
    <property type="match status" value="1"/>
</dbReference>
<dbReference type="InterPro" id="IPR008949">
    <property type="entry name" value="Isoprenoid_synthase_dom_sf"/>
</dbReference>
<dbReference type="InterPro" id="IPR034741">
    <property type="entry name" value="Terpene_cyclase-like_1_C"/>
</dbReference>
<dbReference type="InterPro" id="IPR044814">
    <property type="entry name" value="Terpene_cyclase_plant_C1"/>
</dbReference>
<dbReference type="InterPro" id="IPR001906">
    <property type="entry name" value="Terpene_synth_N"/>
</dbReference>
<dbReference type="InterPro" id="IPR036965">
    <property type="entry name" value="Terpene_synth_N_sf"/>
</dbReference>
<dbReference type="InterPro" id="IPR050148">
    <property type="entry name" value="Terpene_synthase-like"/>
</dbReference>
<dbReference type="InterPro" id="IPR005630">
    <property type="entry name" value="Terpene_synthase_metal-bd"/>
</dbReference>
<dbReference type="InterPro" id="IPR008930">
    <property type="entry name" value="Terpenoid_cyclase/PrenylTrfase"/>
</dbReference>
<dbReference type="PANTHER" id="PTHR31739:SF25">
    <property type="entry name" value="(E,E)-GERANYLLINALOOL SYNTHASE"/>
    <property type="match status" value="1"/>
</dbReference>
<dbReference type="PANTHER" id="PTHR31739">
    <property type="entry name" value="ENT-COPALYL DIPHOSPHATE SYNTHASE, CHLOROPLASTIC"/>
    <property type="match status" value="1"/>
</dbReference>
<dbReference type="Pfam" id="PF01397">
    <property type="entry name" value="Terpene_synth"/>
    <property type="match status" value="1"/>
</dbReference>
<dbReference type="Pfam" id="PF03936">
    <property type="entry name" value="Terpene_synth_C"/>
    <property type="match status" value="1"/>
</dbReference>
<dbReference type="SFLD" id="SFLDS00005">
    <property type="entry name" value="Isoprenoid_Synthase_Type_I"/>
    <property type="match status" value="1"/>
</dbReference>
<dbReference type="SFLD" id="SFLDG01019">
    <property type="entry name" value="Terpene_Cyclase_Like_1_C_Termi"/>
    <property type="match status" value="1"/>
</dbReference>
<dbReference type="SFLD" id="SFLDG01014">
    <property type="entry name" value="Terpene_Cyclase_Like_1_N-term"/>
    <property type="match status" value="1"/>
</dbReference>
<dbReference type="SUPFAM" id="SSF48239">
    <property type="entry name" value="Terpenoid cyclases/Protein prenyltransferases"/>
    <property type="match status" value="2"/>
</dbReference>
<dbReference type="SUPFAM" id="SSF48576">
    <property type="entry name" value="Terpenoid synthases"/>
    <property type="match status" value="1"/>
</dbReference>
<comment type="function">
    <text evidence="2">Involved in defensive oleoresin formation in conifers in response to insect attack or other injury. Involved in sesquiterpene (C15) olefins biosynthesis. Produces mainly (E)-gamma-bisabolene when used with farnesyl diphosphate as substrate. No activity with geranyl diphosphate or geranylgeranyl diphosphate.</text>
</comment>
<comment type="catalytic activity">
    <reaction evidence="2">
        <text>(2E,6E)-farnesyl diphosphate = (E)-gamma-bisabolene + diphosphate</text>
        <dbReference type="Rhea" id="RHEA:28298"/>
        <dbReference type="ChEBI" id="CHEBI:33019"/>
        <dbReference type="ChEBI" id="CHEBI:49239"/>
        <dbReference type="ChEBI" id="CHEBI:175763"/>
        <dbReference type="EC" id="4.2.3.59"/>
    </reaction>
</comment>
<comment type="cofactor">
    <cofactor evidence="1">
        <name>Mg(2+)</name>
        <dbReference type="ChEBI" id="CHEBI:18420"/>
    </cofactor>
    <cofactor evidence="1">
        <name>Mn(2+)</name>
        <dbReference type="ChEBI" id="CHEBI:29035"/>
    </cofactor>
    <text evidence="1">Binds 3 Mg(2+) or Mn(2+) ions per subunit.</text>
</comment>
<comment type="pathway">
    <text>Terpene metabolism; oleoresin biosynthesis.</text>
</comment>
<comment type="subcellular location">
    <subcellularLocation>
        <location evidence="3">Cytoplasm</location>
    </subcellularLocation>
</comment>
<comment type="induction">
    <text evidence="2">Up-regulated by methyl jasmonate.</text>
</comment>
<comment type="domain">
    <text evidence="1">The Asp-Asp-Xaa-Xaa-Asp/Glu (DDXXD/E) motif is important for the catalytic activity, presumably through binding to Mg(2+).</text>
</comment>
<comment type="similarity">
    <text evidence="3">Belongs to the terpene synthase family. Tpsd subfamily.</text>
</comment>
<gene>
    <name type="primary">TPS3</name>
</gene>
<keyword id="KW-0963">Cytoplasm</keyword>
<keyword id="KW-0456">Lyase</keyword>
<keyword id="KW-0460">Magnesium</keyword>
<keyword id="KW-0464">Manganese</keyword>
<keyword id="KW-0479">Metal-binding</keyword>
<protein>
    <recommendedName>
        <fullName>(E)-gamma-bisabolene synthase</fullName>
        <shortName>PmeTPS3</shortName>
        <ecNumber>4.2.3.59</ecNumber>
    </recommendedName>
</protein>
<feature type="chain" id="PRO_0000412238" description="(E)-gamma-bisabolene synthase">
    <location>
        <begin position="1"/>
        <end position="815"/>
    </location>
</feature>
<feature type="short sequence motif" description="DDXXD motif">
    <location>
        <begin position="561"/>
        <end position="565"/>
    </location>
</feature>
<feature type="binding site" evidence="1">
    <location>
        <position position="561"/>
    </location>
    <ligand>
        <name>Mg(2+)</name>
        <dbReference type="ChEBI" id="CHEBI:18420"/>
        <label>1</label>
    </ligand>
</feature>
<feature type="binding site" evidence="1">
    <location>
        <position position="561"/>
    </location>
    <ligand>
        <name>Mg(2+)</name>
        <dbReference type="ChEBI" id="CHEBI:18420"/>
        <label>2</label>
    </ligand>
</feature>
<feature type="binding site" evidence="1">
    <location>
        <position position="565"/>
    </location>
    <ligand>
        <name>Mg(2+)</name>
        <dbReference type="ChEBI" id="CHEBI:18420"/>
        <label>1</label>
    </ligand>
</feature>
<feature type="binding site" evidence="1">
    <location>
        <position position="565"/>
    </location>
    <ligand>
        <name>Mg(2+)</name>
        <dbReference type="ChEBI" id="CHEBI:18420"/>
        <label>2</label>
    </ligand>
</feature>
<feature type="binding site" evidence="1">
    <location>
        <position position="709"/>
    </location>
    <ligand>
        <name>Mg(2+)</name>
        <dbReference type="ChEBI" id="CHEBI:18420"/>
        <label>3</label>
    </ligand>
</feature>
<feature type="binding site" evidence="1">
    <location>
        <position position="717"/>
    </location>
    <ligand>
        <name>Mg(2+)</name>
        <dbReference type="ChEBI" id="CHEBI:18420"/>
        <label>3</label>
    </ligand>
</feature>
<name>TPSBS_PSEMZ</name>
<sequence length="815" mass="93717">MAASTLPSGLSTNDLIRRTANPHPNVWGYDLLCSLKSPYSRDSSYKERADTLINEIKAMLGAAFGDGKEMITPSAYDTAWVARIPSIDGSSGSARPQFPQTVDWILKNQLKDGSWGTESHFLLSEPLLATISCVLALFKWQVGDLQVERGIEFLKSSLEKIKNESDQDSLVTDFEIIFPSMLREAQSLHLGLPYDLPYIQLLQTKRQERLANLSREKIHGGILQLSSLEGIEDMVEWERLMDLQSLDGSFLSSPASTAFVFIHTGDLKCLAFLNSVLAKFGAFVPCLYHVDLLERLLIVDNIERLGIDRHFEKEINEALDYVYRYWSNERGIGWGRMNATADLETTALGFRLLRLHRYHVSPVVFKKFKDADGEFLSSIGQFNKDVASMLNLYRACELAFPGENILDEAKGFTAKYLREALEKTETFSSWNIKRNLSQEIKYALKTSWHASIPRVEAKRYCQVYRPDYARLDKSVYKLHHVNNEKILELAKLDFNIIQSILQEEMKNVTSWFRDSGLPLFSFARQRPLEFYFLITAGTYEPRYAKCRLLFTKVACVETVLDDMYDTYGTLDELKLFTQAVRRWDPSLTENLPDYMKRCYKIFYDIVHEAAWEAEKEQGRELVSFLRKAWEDFVLSYHEEAEWLSAEYVPGFDEYIKNGITSIGQRVLLLSGLLVMDGQLLSQKALEKIDYPERSRVLMEQICLISRLADDTQSYKAEKARGELASGIECYMKDHPECTEEEALNHIYGIMEVTAKELTKEYLKVDDDDVPFACKKMLFEETRVTMVIFKDGDRLSNSKLEMKDHFKECLIEPLPL</sequence>
<reference key="1">
    <citation type="journal article" date="2005" name="Phytochemistry">
        <title>Characterization of four terpene synthase cDNAs from methyl jasmonate-induced Douglas-fir, Pseudotsuga menziesii.</title>
        <authorList>
            <person name="Huber D.P."/>
            <person name="Philippe R.N."/>
            <person name="Godard K.A."/>
            <person name="Sturrock R.N."/>
            <person name="Bohlmann J."/>
        </authorList>
    </citation>
    <scope>NUCLEOTIDE SEQUENCE [MRNA]</scope>
    <scope>FUNCTION</scope>
    <scope>CATALYTIC ACTIVITY</scope>
    <scope>INDUCTION BY METHYL JASMONATE</scope>
</reference>
<proteinExistence type="evidence at protein level"/>
<organism>
    <name type="scientific">Pseudotsuga menziesii</name>
    <name type="common">Douglas-fir</name>
    <name type="synonym">Abies menziesii</name>
    <dbReference type="NCBI Taxonomy" id="3357"/>
    <lineage>
        <taxon>Eukaryota</taxon>
        <taxon>Viridiplantae</taxon>
        <taxon>Streptophyta</taxon>
        <taxon>Embryophyta</taxon>
        <taxon>Tracheophyta</taxon>
        <taxon>Spermatophyta</taxon>
        <taxon>Pinopsida</taxon>
        <taxon>Pinidae</taxon>
        <taxon>Conifers I</taxon>
        <taxon>Pinales</taxon>
        <taxon>Pinaceae</taxon>
        <taxon>Pseudotsuga</taxon>
    </lineage>
</organism>
<accession>Q4QSN4</accession>
<evidence type="ECO:0000250" key="1"/>
<evidence type="ECO:0000269" key="2">
    <source>
    </source>
</evidence>
<evidence type="ECO:0000305" key="3"/>